<name>F16PA_FLAPJ</name>
<feature type="chain" id="PRO_0000364556" description="Fructose-1,6-bisphosphatase class 1">
    <location>
        <begin position="1"/>
        <end position="335"/>
    </location>
</feature>
<feature type="binding site" evidence="1">
    <location>
        <position position="93"/>
    </location>
    <ligand>
        <name>Mg(2+)</name>
        <dbReference type="ChEBI" id="CHEBI:18420"/>
        <label>1</label>
    </ligand>
</feature>
<feature type="binding site" evidence="1">
    <location>
        <position position="117"/>
    </location>
    <ligand>
        <name>Mg(2+)</name>
        <dbReference type="ChEBI" id="CHEBI:18420"/>
        <label>1</label>
    </ligand>
</feature>
<feature type="binding site" evidence="1">
    <location>
        <position position="117"/>
    </location>
    <ligand>
        <name>Mg(2+)</name>
        <dbReference type="ChEBI" id="CHEBI:18420"/>
        <label>2</label>
    </ligand>
</feature>
<feature type="binding site" evidence="1">
    <location>
        <position position="119"/>
    </location>
    <ligand>
        <name>Mg(2+)</name>
        <dbReference type="ChEBI" id="CHEBI:18420"/>
        <label>1</label>
    </ligand>
</feature>
<feature type="binding site" evidence="1">
    <location>
        <begin position="120"/>
        <end position="123"/>
    </location>
    <ligand>
        <name>substrate</name>
    </ligand>
</feature>
<feature type="binding site" evidence="1">
    <location>
        <position position="120"/>
    </location>
    <ligand>
        <name>Mg(2+)</name>
        <dbReference type="ChEBI" id="CHEBI:18420"/>
        <label>2</label>
    </ligand>
</feature>
<feature type="binding site" evidence="1">
    <location>
        <position position="213"/>
    </location>
    <ligand>
        <name>substrate</name>
    </ligand>
</feature>
<feature type="binding site" evidence="1">
    <location>
        <position position="244"/>
    </location>
    <ligand>
        <name>substrate</name>
    </ligand>
</feature>
<feature type="binding site" evidence="1">
    <location>
        <position position="274"/>
    </location>
    <ligand>
        <name>substrate</name>
    </ligand>
</feature>
<feature type="binding site" evidence="1">
    <location>
        <position position="280"/>
    </location>
    <ligand>
        <name>Mg(2+)</name>
        <dbReference type="ChEBI" id="CHEBI:18420"/>
        <label>2</label>
    </ligand>
</feature>
<comment type="catalytic activity">
    <reaction evidence="1">
        <text>beta-D-fructose 1,6-bisphosphate + H2O = beta-D-fructose 6-phosphate + phosphate</text>
        <dbReference type="Rhea" id="RHEA:11064"/>
        <dbReference type="ChEBI" id="CHEBI:15377"/>
        <dbReference type="ChEBI" id="CHEBI:32966"/>
        <dbReference type="ChEBI" id="CHEBI:43474"/>
        <dbReference type="ChEBI" id="CHEBI:57634"/>
        <dbReference type="EC" id="3.1.3.11"/>
    </reaction>
</comment>
<comment type="cofactor">
    <cofactor evidence="1">
        <name>Mg(2+)</name>
        <dbReference type="ChEBI" id="CHEBI:18420"/>
    </cofactor>
    <text evidence="1">Binds 2 magnesium ions per subunit.</text>
</comment>
<comment type="pathway">
    <text evidence="1">Carbohydrate biosynthesis; gluconeogenesis.</text>
</comment>
<comment type="subunit">
    <text evidence="1">Homotetramer.</text>
</comment>
<comment type="subcellular location">
    <subcellularLocation>
        <location evidence="1">Cytoplasm</location>
    </subcellularLocation>
</comment>
<comment type="similarity">
    <text evidence="1">Belongs to the FBPase class 1 family.</text>
</comment>
<keyword id="KW-0119">Carbohydrate metabolism</keyword>
<keyword id="KW-0963">Cytoplasm</keyword>
<keyword id="KW-0378">Hydrolase</keyword>
<keyword id="KW-0460">Magnesium</keyword>
<keyword id="KW-0479">Metal-binding</keyword>
<keyword id="KW-1185">Reference proteome</keyword>
<evidence type="ECO:0000255" key="1">
    <source>
        <dbReference type="HAMAP-Rule" id="MF_01855"/>
    </source>
</evidence>
<dbReference type="EC" id="3.1.3.11" evidence="1"/>
<dbReference type="EMBL" id="AM398681">
    <property type="protein sequence ID" value="CAL42412.1"/>
    <property type="molecule type" value="Genomic_DNA"/>
</dbReference>
<dbReference type="RefSeq" id="WP_011962470.1">
    <property type="nucleotide sequence ID" value="NC_009613.3"/>
</dbReference>
<dbReference type="RefSeq" id="YP_001295230.1">
    <property type="nucleotide sequence ID" value="NC_009613.3"/>
</dbReference>
<dbReference type="SMR" id="A6GWD9"/>
<dbReference type="STRING" id="402612.FP0299"/>
<dbReference type="EnsemblBacteria" id="CAL42412">
    <property type="protein sequence ID" value="CAL42412"/>
    <property type="gene ID" value="FP0299"/>
</dbReference>
<dbReference type="GeneID" id="66553931"/>
<dbReference type="KEGG" id="fps:FP0299"/>
<dbReference type="PATRIC" id="fig|402612.5.peg.312"/>
<dbReference type="eggNOG" id="COG0158">
    <property type="taxonomic scope" value="Bacteria"/>
</dbReference>
<dbReference type="HOGENOM" id="CLU_039977_2_2_10"/>
<dbReference type="OrthoDB" id="9806756at2"/>
<dbReference type="UniPathway" id="UPA00138"/>
<dbReference type="Proteomes" id="UP000006394">
    <property type="component" value="Chromosome"/>
</dbReference>
<dbReference type="GO" id="GO:0005829">
    <property type="term" value="C:cytosol"/>
    <property type="evidence" value="ECO:0007669"/>
    <property type="project" value="TreeGrafter"/>
</dbReference>
<dbReference type="GO" id="GO:0042132">
    <property type="term" value="F:fructose 1,6-bisphosphate 1-phosphatase activity"/>
    <property type="evidence" value="ECO:0007669"/>
    <property type="project" value="UniProtKB-UniRule"/>
</dbReference>
<dbReference type="GO" id="GO:0000287">
    <property type="term" value="F:magnesium ion binding"/>
    <property type="evidence" value="ECO:0007669"/>
    <property type="project" value="UniProtKB-UniRule"/>
</dbReference>
<dbReference type="GO" id="GO:0030388">
    <property type="term" value="P:fructose 1,6-bisphosphate metabolic process"/>
    <property type="evidence" value="ECO:0007669"/>
    <property type="project" value="TreeGrafter"/>
</dbReference>
<dbReference type="GO" id="GO:0006002">
    <property type="term" value="P:fructose 6-phosphate metabolic process"/>
    <property type="evidence" value="ECO:0007669"/>
    <property type="project" value="TreeGrafter"/>
</dbReference>
<dbReference type="GO" id="GO:0006000">
    <property type="term" value="P:fructose metabolic process"/>
    <property type="evidence" value="ECO:0007669"/>
    <property type="project" value="TreeGrafter"/>
</dbReference>
<dbReference type="GO" id="GO:0006094">
    <property type="term" value="P:gluconeogenesis"/>
    <property type="evidence" value="ECO:0007669"/>
    <property type="project" value="UniProtKB-UniRule"/>
</dbReference>
<dbReference type="GO" id="GO:0005986">
    <property type="term" value="P:sucrose biosynthetic process"/>
    <property type="evidence" value="ECO:0007669"/>
    <property type="project" value="TreeGrafter"/>
</dbReference>
<dbReference type="CDD" id="cd00354">
    <property type="entry name" value="FBPase"/>
    <property type="match status" value="1"/>
</dbReference>
<dbReference type="FunFam" id="3.30.540.10:FF:000002">
    <property type="entry name" value="Fructose-1,6-bisphosphatase class 1"/>
    <property type="match status" value="1"/>
</dbReference>
<dbReference type="FunFam" id="3.40.190.80:FF:000001">
    <property type="entry name" value="Fructose-1,6-bisphosphatase class 1"/>
    <property type="match status" value="1"/>
</dbReference>
<dbReference type="Gene3D" id="3.40.190.80">
    <property type="match status" value="1"/>
</dbReference>
<dbReference type="Gene3D" id="3.30.540.10">
    <property type="entry name" value="Fructose-1,6-Bisphosphatase, subunit A, domain 1"/>
    <property type="match status" value="1"/>
</dbReference>
<dbReference type="HAMAP" id="MF_01855">
    <property type="entry name" value="FBPase_class1"/>
    <property type="match status" value="1"/>
</dbReference>
<dbReference type="InterPro" id="IPR044015">
    <property type="entry name" value="FBPase_C_dom"/>
</dbReference>
<dbReference type="InterPro" id="IPR000146">
    <property type="entry name" value="FBPase_class-1"/>
</dbReference>
<dbReference type="InterPro" id="IPR033391">
    <property type="entry name" value="FBPase_N"/>
</dbReference>
<dbReference type="InterPro" id="IPR028343">
    <property type="entry name" value="FBPtase"/>
</dbReference>
<dbReference type="InterPro" id="IPR020548">
    <property type="entry name" value="Fructose_bisphosphatase_AS"/>
</dbReference>
<dbReference type="NCBIfam" id="NF006778">
    <property type="entry name" value="PRK09293.1-1"/>
    <property type="match status" value="1"/>
</dbReference>
<dbReference type="NCBIfam" id="NF006779">
    <property type="entry name" value="PRK09293.1-3"/>
    <property type="match status" value="1"/>
</dbReference>
<dbReference type="PANTHER" id="PTHR11556">
    <property type="entry name" value="FRUCTOSE-1,6-BISPHOSPHATASE-RELATED"/>
    <property type="match status" value="1"/>
</dbReference>
<dbReference type="PANTHER" id="PTHR11556:SF35">
    <property type="entry name" value="SEDOHEPTULOSE-1,7-BISPHOSPHATASE, CHLOROPLASTIC"/>
    <property type="match status" value="1"/>
</dbReference>
<dbReference type="Pfam" id="PF00316">
    <property type="entry name" value="FBPase"/>
    <property type="match status" value="1"/>
</dbReference>
<dbReference type="Pfam" id="PF18913">
    <property type="entry name" value="FBPase_C"/>
    <property type="match status" value="1"/>
</dbReference>
<dbReference type="PIRSF" id="PIRSF500210">
    <property type="entry name" value="FBPtase"/>
    <property type="match status" value="1"/>
</dbReference>
<dbReference type="PIRSF" id="PIRSF000904">
    <property type="entry name" value="FBPtase_SBPase"/>
    <property type="match status" value="1"/>
</dbReference>
<dbReference type="PRINTS" id="PR00115">
    <property type="entry name" value="F16BPHPHTASE"/>
</dbReference>
<dbReference type="SUPFAM" id="SSF56655">
    <property type="entry name" value="Carbohydrate phosphatase"/>
    <property type="match status" value="1"/>
</dbReference>
<dbReference type="PROSITE" id="PS00124">
    <property type="entry name" value="FBPASE"/>
    <property type="match status" value="1"/>
</dbReference>
<gene>
    <name evidence="1" type="primary">fbp</name>
    <name type="ordered locus">FP0299</name>
</gene>
<proteinExistence type="inferred from homology"/>
<reference key="1">
    <citation type="journal article" date="2007" name="Nat. Biotechnol.">
        <title>Complete genome sequence of the fish pathogen Flavobacterium psychrophilum.</title>
        <authorList>
            <person name="Duchaud E."/>
            <person name="Boussaha M."/>
            <person name="Loux V."/>
            <person name="Bernardet J.-F."/>
            <person name="Michel C."/>
            <person name="Kerouault B."/>
            <person name="Mondot S."/>
            <person name="Nicolas P."/>
            <person name="Bossy R."/>
            <person name="Caron C."/>
            <person name="Bessieres P."/>
            <person name="Gibrat J.-F."/>
            <person name="Claverol S."/>
            <person name="Dumetz F."/>
            <person name="Le Henaff M."/>
            <person name="Benmansour A."/>
        </authorList>
    </citation>
    <scope>NUCLEOTIDE SEQUENCE [LARGE SCALE GENOMIC DNA]</scope>
    <source>
        <strain>ATCC 49511 / DSM 21280 / CIP 103535 / JIP02/86</strain>
    </source>
</reference>
<protein>
    <recommendedName>
        <fullName evidence="1">Fructose-1,6-bisphosphatase class 1</fullName>
        <shortName evidence="1">FBPase class 1</shortName>
        <ecNumber evidence="1">3.1.3.11</ecNumber>
    </recommendedName>
    <alternativeName>
        <fullName evidence="1">D-fructose-1,6-bisphosphate 1-phosphohydrolase class 1</fullName>
    </alternativeName>
</protein>
<sequence>MEERNKTLGEFIIENQQSFQYSSGELSRIINSIRLAAKVVNYKVNKAGLVDIVGAAGEQNIQGEDQQKLDVYANEIFIQTLINREIVCGIASEENDDFITVAGSDNSHNNKYVVLMDPLDGSSNIDVNVSVGTIFSVFRRITPVGTPVTIEDFLQPGINQVAAGYVIYGTSTMLVYTTGDGVNGFTLNPAIGTFYLSHPNMKYSKDGHIYSMNEGNYVHFPQGVKNYIKYCQSEEGDRPYTSRYIGSLVSDFHRNMIKGGIYIYPTSSKAPKGKLRLLYECSPMAFIAEQAGGKASDGYNRIMEIQPTELHQRVPFFCGSYNMVEKAEEFMKNTK</sequence>
<organism>
    <name type="scientific">Flavobacterium psychrophilum (strain ATCC 49511 / DSM 21280 / CIP 103535 / JIP02/86)</name>
    <dbReference type="NCBI Taxonomy" id="402612"/>
    <lineage>
        <taxon>Bacteria</taxon>
        <taxon>Pseudomonadati</taxon>
        <taxon>Bacteroidota</taxon>
        <taxon>Flavobacteriia</taxon>
        <taxon>Flavobacteriales</taxon>
        <taxon>Flavobacteriaceae</taxon>
        <taxon>Flavobacterium</taxon>
    </lineage>
</organism>
<accession>A6GWD9</accession>